<comment type="function">
    <text evidence="1">Functions as a transporter for creatine and as well for its precursor guanidinoacetate. Transport of creatine and GAA is independent of resting membrane potential and extracellular Na(+), Cl(-), or pH. Contributes to the process of creatine biosynthesis and distribution.</text>
</comment>
<comment type="catalytic activity">
    <reaction evidence="1">
        <text>creatine(in) = creatine(out)</text>
        <dbReference type="Rhea" id="RHEA:73043"/>
        <dbReference type="ChEBI" id="CHEBI:57947"/>
    </reaction>
</comment>
<comment type="catalytic activity">
    <reaction evidence="1">
        <text>guanidinoacetate(in) = guanidinoacetate(out)</text>
        <dbReference type="Rhea" id="RHEA:73047"/>
        <dbReference type="ChEBI" id="CHEBI:57742"/>
    </reaction>
</comment>
<comment type="subcellular location">
    <subcellularLocation>
        <location evidence="1">Cell membrane</location>
        <topology evidence="3">Multi-pass membrane protein</topology>
    </subcellularLocation>
    <subcellularLocation>
        <location evidence="2">Basolateral cell membrane</location>
        <topology evidence="3">Multi-pass membrane protein</topology>
    </subcellularLocation>
</comment>
<comment type="similarity">
    <text evidence="4">Belongs to the major facilitator superfamily. Monocarboxylate porter (TC 2.A.1.13) family.</text>
</comment>
<name>MOT12_XENLA</name>
<proteinExistence type="evidence at transcript level"/>
<gene>
    <name type="primary">slc16a12</name>
</gene>
<feature type="chain" id="PRO_0000286967" description="Monocarboxylate transporter 12">
    <location>
        <begin position="1"/>
        <end position="460"/>
    </location>
</feature>
<feature type="topological domain" description="Cytoplasmic" evidence="3">
    <location>
        <begin position="1"/>
        <end position="10"/>
    </location>
</feature>
<feature type="transmembrane region" description="Helical" evidence="3">
    <location>
        <begin position="11"/>
        <end position="31"/>
    </location>
</feature>
<feature type="transmembrane region" description="Helical" evidence="3">
    <location>
        <begin position="58"/>
        <end position="78"/>
    </location>
</feature>
<feature type="transmembrane region" description="Helical" evidence="3">
    <location>
        <begin position="86"/>
        <end position="106"/>
    </location>
</feature>
<feature type="transmembrane region" description="Helical" evidence="3">
    <location>
        <begin position="115"/>
        <end position="135"/>
    </location>
</feature>
<feature type="transmembrane region" description="Helical" evidence="3">
    <location>
        <begin position="148"/>
        <end position="168"/>
    </location>
</feature>
<feature type="transmembrane region" description="Helical" evidence="3">
    <location>
        <begin position="177"/>
        <end position="197"/>
    </location>
</feature>
<feature type="transmembrane region" description="Helical" evidence="3">
    <location>
        <begin position="246"/>
        <end position="266"/>
    </location>
</feature>
<feature type="transmembrane region" description="Helical" evidence="3">
    <location>
        <begin position="282"/>
        <end position="302"/>
    </location>
</feature>
<feature type="transmembrane region" description="Helical" evidence="3">
    <location>
        <begin position="329"/>
        <end position="349"/>
    </location>
</feature>
<feature type="transmembrane region" description="Helical" evidence="3">
    <location>
        <begin position="354"/>
        <end position="374"/>
    </location>
</feature>
<feature type="transmembrane region" description="Helical" evidence="3">
    <location>
        <begin position="376"/>
        <end position="396"/>
    </location>
</feature>
<feature type="transmembrane region" description="Helical" evidence="3">
    <location>
        <begin position="406"/>
        <end position="426"/>
    </location>
</feature>
<feature type="topological domain" description="Cytoplasmic" evidence="3">
    <location>
        <begin position="427"/>
        <end position="460"/>
    </location>
</feature>
<reference key="1">
    <citation type="submission" date="2004-06" db="EMBL/GenBank/DDBJ databases">
        <authorList>
            <consortium name="NIH - Xenopus Gene Collection (XGC) project"/>
        </authorList>
    </citation>
    <scope>NUCLEOTIDE SEQUENCE [LARGE SCALE MRNA]</scope>
    <source>
        <tissue>Kidney</tissue>
    </source>
</reference>
<dbReference type="EMBL" id="BC074222">
    <property type="protein sequence ID" value="AAH74222.1"/>
    <property type="molecule type" value="mRNA"/>
</dbReference>
<dbReference type="RefSeq" id="NP_001086124.1">
    <property type="nucleotide sequence ID" value="NM_001092655.1"/>
</dbReference>
<dbReference type="SMR" id="Q6GM59"/>
<dbReference type="DNASU" id="444553"/>
<dbReference type="GeneID" id="444553"/>
<dbReference type="KEGG" id="xla:444553"/>
<dbReference type="AGR" id="Xenbase:XB-GENE-1012790"/>
<dbReference type="CTD" id="444553"/>
<dbReference type="Xenbase" id="XB-GENE-1012790">
    <property type="gene designation" value="slc16a12.S"/>
</dbReference>
<dbReference type="OrthoDB" id="410267at2759"/>
<dbReference type="Proteomes" id="UP000186698">
    <property type="component" value="Chromosome 7S"/>
</dbReference>
<dbReference type="Bgee" id="444553">
    <property type="expression patterns" value="Expressed in kidney and 15 other cell types or tissues"/>
</dbReference>
<dbReference type="GO" id="GO:0016323">
    <property type="term" value="C:basolateral plasma membrane"/>
    <property type="evidence" value="ECO:0000250"/>
    <property type="project" value="UniProtKB"/>
</dbReference>
<dbReference type="GO" id="GO:0005886">
    <property type="term" value="C:plasma membrane"/>
    <property type="evidence" value="ECO:0000250"/>
    <property type="project" value="UniProtKB"/>
</dbReference>
<dbReference type="GO" id="GO:0005308">
    <property type="term" value="F:creatine transmembrane transporter activity"/>
    <property type="evidence" value="ECO:0000250"/>
    <property type="project" value="UniProtKB"/>
</dbReference>
<dbReference type="GO" id="GO:0022857">
    <property type="term" value="F:transmembrane transporter activity"/>
    <property type="evidence" value="ECO:0000318"/>
    <property type="project" value="GO_Central"/>
</dbReference>
<dbReference type="GO" id="GO:0015292">
    <property type="term" value="F:uniporter activity"/>
    <property type="evidence" value="ECO:0000250"/>
    <property type="project" value="UniProtKB"/>
</dbReference>
<dbReference type="GO" id="GO:0015881">
    <property type="term" value="P:creatine transmembrane transport"/>
    <property type="evidence" value="ECO:0000250"/>
    <property type="project" value="UniProtKB"/>
</dbReference>
<dbReference type="GO" id="GO:0046449">
    <property type="term" value="P:creatinine metabolic process"/>
    <property type="evidence" value="ECO:0000250"/>
    <property type="project" value="UniProtKB"/>
</dbReference>
<dbReference type="CDD" id="cd17424">
    <property type="entry name" value="MFS_MCT12"/>
    <property type="match status" value="1"/>
</dbReference>
<dbReference type="FunFam" id="1.20.1250.20:FF:000128">
    <property type="entry name" value="monocarboxylate transporter 12 isoform X1"/>
    <property type="match status" value="1"/>
</dbReference>
<dbReference type="FunFam" id="1.20.1250.20:FF:000160">
    <property type="entry name" value="monocarboxylate transporter 12 isoform X1"/>
    <property type="match status" value="1"/>
</dbReference>
<dbReference type="Gene3D" id="1.20.1250.20">
    <property type="entry name" value="MFS general substrate transporter like domains"/>
    <property type="match status" value="2"/>
</dbReference>
<dbReference type="InterPro" id="IPR011701">
    <property type="entry name" value="MFS"/>
</dbReference>
<dbReference type="InterPro" id="IPR020846">
    <property type="entry name" value="MFS_dom"/>
</dbReference>
<dbReference type="InterPro" id="IPR036259">
    <property type="entry name" value="MFS_trans_sf"/>
</dbReference>
<dbReference type="InterPro" id="IPR050327">
    <property type="entry name" value="Proton-linked_MCT"/>
</dbReference>
<dbReference type="PANTHER" id="PTHR11360">
    <property type="entry name" value="MONOCARBOXYLATE TRANSPORTER"/>
    <property type="match status" value="1"/>
</dbReference>
<dbReference type="PANTHER" id="PTHR11360:SF318">
    <property type="entry name" value="MONOCARBOXYLATE TRANSPORTER 12"/>
    <property type="match status" value="1"/>
</dbReference>
<dbReference type="Pfam" id="PF07690">
    <property type="entry name" value="MFS_1"/>
    <property type="match status" value="1"/>
</dbReference>
<dbReference type="SUPFAM" id="SSF103473">
    <property type="entry name" value="MFS general substrate transporter"/>
    <property type="match status" value="1"/>
</dbReference>
<dbReference type="PROSITE" id="PS50850">
    <property type="entry name" value="MFS"/>
    <property type="match status" value="1"/>
</dbReference>
<evidence type="ECO:0000250" key="1">
    <source>
        <dbReference type="UniProtKB" id="Q6ZSM3"/>
    </source>
</evidence>
<evidence type="ECO:0000250" key="2">
    <source>
        <dbReference type="UniProtKB" id="Q8BGC3"/>
    </source>
</evidence>
<evidence type="ECO:0000255" key="3"/>
<evidence type="ECO:0000305" key="4"/>
<keyword id="KW-1003">Cell membrane</keyword>
<keyword id="KW-0472">Membrane</keyword>
<keyword id="KW-1185">Reference proteome</keyword>
<keyword id="KW-0812">Transmembrane</keyword>
<keyword id="KW-1133">Transmembrane helix</keyword>
<sequence>MTQEKRSLHKTPPDGGWGWMIVIGCFFVTVCTRAVTRCISIFFVEFQSYFAQDYARTAWIHSIVDCSTMLCAPIGSYVSNHFSCQVGIILGGVLASTGLVLSSFATSLEYLYLTLGVLTGLGFALCYSPAIAMVGKYFEKRKALAYGIAMSGSGIGTFILAPVVQLLIEQFSWRGALLILGGFVSNLCVCGALMRPISLKEDSLHYPLKREPQLDSSCSPLCQDCSHKKLCYCTTKEYHFLLKPKFIILAVSFLFLAYGCSPPFVYLVPYSLSVGVSHQEAAFLMSILGIVDIVGNITFGWVTDRRFLKKHRYCCYLIAVGLDGLCCLFLPILTCFQLLVPFSVMFGYFDGAYVALIPVITGDVVGTSNLSSALGVVFFLHAVPYLLSPPIAGWLVDTTGDYTAAFLLSGFSMIFCSILLGLAKIINRIKKNPQATVVRSSDIKQEVWTNGDVSCLNAIS</sequence>
<organism>
    <name type="scientific">Xenopus laevis</name>
    <name type="common">African clawed frog</name>
    <dbReference type="NCBI Taxonomy" id="8355"/>
    <lineage>
        <taxon>Eukaryota</taxon>
        <taxon>Metazoa</taxon>
        <taxon>Chordata</taxon>
        <taxon>Craniata</taxon>
        <taxon>Vertebrata</taxon>
        <taxon>Euteleostomi</taxon>
        <taxon>Amphibia</taxon>
        <taxon>Batrachia</taxon>
        <taxon>Anura</taxon>
        <taxon>Pipoidea</taxon>
        <taxon>Pipidae</taxon>
        <taxon>Xenopodinae</taxon>
        <taxon>Xenopus</taxon>
        <taxon>Xenopus</taxon>
    </lineage>
</organism>
<accession>Q6GM59</accession>
<protein>
    <recommendedName>
        <fullName evidence="4">Monocarboxylate transporter 12</fullName>
        <shortName evidence="4">MCT 12</shortName>
    </recommendedName>
    <alternativeName>
        <fullName>Solute carrier family 16 member 12</fullName>
    </alternativeName>
</protein>